<comment type="subcellular location">
    <subcellularLocation>
        <location>Secreted</location>
    </subcellularLocation>
</comment>
<comment type="similarity">
    <text evidence="2">Belongs to the POMC family.</text>
</comment>
<proteinExistence type="evidence at protein level"/>
<reference key="1">
    <citation type="journal article" date="1994" name="FEBS Lett.">
        <title>Isolation and structural characterization of a novel peptide related to gamma-melanocyte stimulating hormone from the brain of the leech Theromyzon tessulatum.</title>
        <authorList>
            <person name="Salzet M."/>
            <person name="Wattez C."/>
            <person name="Bulet P."/>
            <person name="Malecha J."/>
        </authorList>
    </citation>
    <scope>PROTEIN SEQUENCE</scope>
    <scope>AMIDATION AT PHE-11</scope>
    <source>
        <tissue>Brain</tissue>
    </source>
</reference>
<organism>
    <name type="scientific">Theromyzon tessulatum</name>
    <name type="common">Duck leech</name>
    <dbReference type="NCBI Taxonomy" id="13286"/>
    <lineage>
        <taxon>Eukaryota</taxon>
        <taxon>Metazoa</taxon>
        <taxon>Spiralia</taxon>
        <taxon>Lophotrochozoa</taxon>
        <taxon>Annelida</taxon>
        <taxon>Clitellata</taxon>
        <taxon>Hirudinea</taxon>
        <taxon>Rhynchobdellida</taxon>
        <taxon>Glossiphoniidae</taxon>
        <taxon>Theromyzon</taxon>
    </lineage>
</organism>
<protein>
    <recommendedName>
        <fullName>Melanotropin gamma</fullName>
    </recommendedName>
    <alternativeName>
        <fullName>Gamma-melanocyte-stimulating hormone</fullName>
        <shortName>Gamma-MSH</shortName>
    </alternativeName>
</protein>
<feature type="peptide" id="PRO_0000044296" description="Melanotropin gamma">
    <location>
        <begin position="1"/>
        <end position="11"/>
    </location>
</feature>
<feature type="modified residue" description="Phenylalanine amide" evidence="1">
    <location>
        <position position="11"/>
    </location>
</feature>
<accession>P41989</accession>
<dbReference type="PIR" id="S45698">
    <property type="entry name" value="S45698"/>
</dbReference>
<dbReference type="GO" id="GO:0005576">
    <property type="term" value="C:extracellular region"/>
    <property type="evidence" value="ECO:0007669"/>
    <property type="project" value="UniProtKB-SubCell"/>
</dbReference>
<dbReference type="GO" id="GO:0005179">
    <property type="term" value="F:hormone activity"/>
    <property type="evidence" value="ECO:0007669"/>
    <property type="project" value="UniProtKB-KW"/>
</dbReference>
<keyword id="KW-0027">Amidation</keyword>
<keyword id="KW-0903">Direct protein sequencing</keyword>
<keyword id="KW-0372">Hormone</keyword>
<keyword id="KW-0964">Secreted</keyword>
<evidence type="ECO:0000269" key="1">
    <source>
    </source>
</evidence>
<evidence type="ECO:0000305" key="2"/>
<sequence>YVMGHFRWDKF</sequence>
<name>MLG_THETS</name>